<gene>
    <name evidence="1" type="primary">atpG</name>
    <name type="ordered locus">HRM2_35180</name>
</gene>
<name>ATPG_DESAH</name>
<evidence type="ECO:0000255" key="1">
    <source>
        <dbReference type="HAMAP-Rule" id="MF_00815"/>
    </source>
</evidence>
<reference key="1">
    <citation type="journal article" date="2009" name="Environ. Microbiol.">
        <title>Genome sequence of Desulfobacterium autotrophicum HRM2, a marine sulfate reducer oxidizing organic carbon completely to carbon dioxide.</title>
        <authorList>
            <person name="Strittmatter A.W."/>
            <person name="Liesegang H."/>
            <person name="Rabus R."/>
            <person name="Decker I."/>
            <person name="Amann J."/>
            <person name="Andres S."/>
            <person name="Henne A."/>
            <person name="Fricke W.F."/>
            <person name="Martinez-Arias R."/>
            <person name="Bartels D."/>
            <person name="Goesmann A."/>
            <person name="Krause L."/>
            <person name="Puehler A."/>
            <person name="Klenk H.P."/>
            <person name="Richter M."/>
            <person name="Schuler M."/>
            <person name="Gloeckner F.O."/>
            <person name="Meyerdierks A."/>
            <person name="Gottschalk G."/>
            <person name="Amann R."/>
        </authorList>
    </citation>
    <scope>NUCLEOTIDE SEQUENCE [LARGE SCALE GENOMIC DNA]</scope>
    <source>
        <strain>ATCC 43914 / DSM 3382 / VKM B-1955 / HRM2</strain>
    </source>
</reference>
<sequence>MATLKEVQLKIGSVKKTRQITSAMKMVATSRLRGSQEKMDRFKPYASKFSEVLGSIAGKAGEEASPLLVPREEPKKVNVILCTSDRGLCGGFNVNLIDKADKFIKSKLQDKEVTFTCFGKKGRDWAKKMSMTIDDQYLGVVGGKFDFSVASTSGQKLINRFLEADVDEVYLVYSEFKNLARQEPVVKQLLPIPSLEAMEKPDEAGAKEETAYLAEHICEPSSDALLGEMLPKNIFIQIYDALLQTSTSENAQRMKAMENATKACKDMIDELQTIFNKTRQAGITADLMDIVGGAEALN</sequence>
<protein>
    <recommendedName>
        <fullName evidence="1">ATP synthase gamma chain</fullName>
    </recommendedName>
    <alternativeName>
        <fullName evidence="1">ATP synthase F1 sector gamma subunit</fullName>
    </alternativeName>
    <alternativeName>
        <fullName evidence="1">F-ATPase gamma subunit</fullName>
    </alternativeName>
</protein>
<comment type="function">
    <text evidence="1">Produces ATP from ADP in the presence of a proton gradient across the membrane. The gamma chain is believed to be important in regulating ATPase activity and the flow of protons through the CF(0) complex.</text>
</comment>
<comment type="subunit">
    <text evidence="1">F-type ATPases have 2 components, CF(1) - the catalytic core - and CF(0) - the membrane proton channel. CF(1) has five subunits: alpha(3), beta(3), gamma(1), delta(1), epsilon(1). CF(0) has three main subunits: a, b and c.</text>
</comment>
<comment type="subcellular location">
    <subcellularLocation>
        <location evidence="1">Cell inner membrane</location>
        <topology evidence="1">Peripheral membrane protein</topology>
    </subcellularLocation>
</comment>
<comment type="similarity">
    <text evidence="1">Belongs to the ATPase gamma chain family.</text>
</comment>
<dbReference type="EMBL" id="CP001087">
    <property type="protein sequence ID" value="ACN16584.1"/>
    <property type="molecule type" value="Genomic_DNA"/>
</dbReference>
<dbReference type="RefSeq" id="WP_015905334.1">
    <property type="nucleotide sequence ID" value="NC_012108.1"/>
</dbReference>
<dbReference type="SMR" id="C0Q979"/>
<dbReference type="STRING" id="177437.HRM2_35180"/>
<dbReference type="KEGG" id="dat:HRM2_35180"/>
<dbReference type="eggNOG" id="COG0224">
    <property type="taxonomic scope" value="Bacteria"/>
</dbReference>
<dbReference type="HOGENOM" id="CLU_050669_0_1_7"/>
<dbReference type="OrthoDB" id="9812769at2"/>
<dbReference type="Proteomes" id="UP000000442">
    <property type="component" value="Chromosome"/>
</dbReference>
<dbReference type="GO" id="GO:0005886">
    <property type="term" value="C:plasma membrane"/>
    <property type="evidence" value="ECO:0007669"/>
    <property type="project" value="UniProtKB-SubCell"/>
</dbReference>
<dbReference type="GO" id="GO:0045259">
    <property type="term" value="C:proton-transporting ATP synthase complex"/>
    <property type="evidence" value="ECO:0007669"/>
    <property type="project" value="UniProtKB-KW"/>
</dbReference>
<dbReference type="GO" id="GO:0005524">
    <property type="term" value="F:ATP binding"/>
    <property type="evidence" value="ECO:0007669"/>
    <property type="project" value="UniProtKB-UniRule"/>
</dbReference>
<dbReference type="GO" id="GO:0046933">
    <property type="term" value="F:proton-transporting ATP synthase activity, rotational mechanism"/>
    <property type="evidence" value="ECO:0007669"/>
    <property type="project" value="UniProtKB-UniRule"/>
</dbReference>
<dbReference type="GO" id="GO:0042777">
    <property type="term" value="P:proton motive force-driven plasma membrane ATP synthesis"/>
    <property type="evidence" value="ECO:0007669"/>
    <property type="project" value="UniProtKB-UniRule"/>
</dbReference>
<dbReference type="CDD" id="cd12151">
    <property type="entry name" value="F1-ATPase_gamma"/>
    <property type="match status" value="1"/>
</dbReference>
<dbReference type="Gene3D" id="3.40.1380.10">
    <property type="match status" value="1"/>
</dbReference>
<dbReference type="Gene3D" id="1.10.287.80">
    <property type="entry name" value="ATP synthase, gamma subunit, helix hairpin domain"/>
    <property type="match status" value="1"/>
</dbReference>
<dbReference type="HAMAP" id="MF_00815">
    <property type="entry name" value="ATP_synth_gamma_bact"/>
    <property type="match status" value="1"/>
</dbReference>
<dbReference type="InterPro" id="IPR035968">
    <property type="entry name" value="ATP_synth_F1_ATPase_gsu"/>
</dbReference>
<dbReference type="InterPro" id="IPR000131">
    <property type="entry name" value="ATP_synth_F1_gsu"/>
</dbReference>
<dbReference type="NCBIfam" id="TIGR01146">
    <property type="entry name" value="ATPsyn_F1gamma"/>
    <property type="match status" value="1"/>
</dbReference>
<dbReference type="PANTHER" id="PTHR11693">
    <property type="entry name" value="ATP SYNTHASE GAMMA CHAIN"/>
    <property type="match status" value="1"/>
</dbReference>
<dbReference type="PANTHER" id="PTHR11693:SF22">
    <property type="entry name" value="ATP SYNTHASE SUBUNIT GAMMA, MITOCHONDRIAL"/>
    <property type="match status" value="1"/>
</dbReference>
<dbReference type="Pfam" id="PF00231">
    <property type="entry name" value="ATP-synt"/>
    <property type="match status" value="1"/>
</dbReference>
<dbReference type="PRINTS" id="PR00126">
    <property type="entry name" value="ATPASEGAMMA"/>
</dbReference>
<dbReference type="SUPFAM" id="SSF52943">
    <property type="entry name" value="ATP synthase (F1-ATPase), gamma subunit"/>
    <property type="match status" value="1"/>
</dbReference>
<accession>C0Q979</accession>
<organism>
    <name type="scientific">Desulforapulum autotrophicum (strain ATCC 43914 / DSM 3382 / VKM B-1955 / HRM2)</name>
    <name type="common">Desulfobacterium autotrophicum</name>
    <dbReference type="NCBI Taxonomy" id="177437"/>
    <lineage>
        <taxon>Bacteria</taxon>
        <taxon>Pseudomonadati</taxon>
        <taxon>Thermodesulfobacteriota</taxon>
        <taxon>Desulfobacteria</taxon>
        <taxon>Desulfobacterales</taxon>
        <taxon>Desulfobacteraceae</taxon>
        <taxon>Desulforapulum</taxon>
    </lineage>
</organism>
<feature type="chain" id="PRO_1000213032" description="ATP synthase gamma chain">
    <location>
        <begin position="1"/>
        <end position="298"/>
    </location>
</feature>
<proteinExistence type="inferred from homology"/>
<keyword id="KW-0066">ATP synthesis</keyword>
<keyword id="KW-0997">Cell inner membrane</keyword>
<keyword id="KW-1003">Cell membrane</keyword>
<keyword id="KW-0139">CF(1)</keyword>
<keyword id="KW-0375">Hydrogen ion transport</keyword>
<keyword id="KW-0406">Ion transport</keyword>
<keyword id="KW-0472">Membrane</keyword>
<keyword id="KW-1185">Reference proteome</keyword>
<keyword id="KW-0813">Transport</keyword>